<accession>O65857</accession>
<accession>Q0JMQ5</accession>
<accession>Q9AS49</accession>
<organism>
    <name type="scientific">Oryza sativa subsp. japonica</name>
    <name type="common">Rice</name>
    <dbReference type="NCBI Taxonomy" id="39947"/>
    <lineage>
        <taxon>Eukaryota</taxon>
        <taxon>Viridiplantae</taxon>
        <taxon>Streptophyta</taxon>
        <taxon>Embryophyta</taxon>
        <taxon>Tracheophyta</taxon>
        <taxon>Spermatophyta</taxon>
        <taxon>Magnoliopsida</taxon>
        <taxon>Liliopsida</taxon>
        <taxon>Poales</taxon>
        <taxon>Poaceae</taxon>
        <taxon>BOP clade</taxon>
        <taxon>Oryzoideae</taxon>
        <taxon>Oryzeae</taxon>
        <taxon>Oryzinae</taxon>
        <taxon>Oryza</taxon>
        <taxon>Oryza sativa</taxon>
    </lineage>
</organism>
<name>GSTF1_ORYSJ</name>
<feature type="chain" id="PRO_0000185844" description="Probable glutathione S-transferase GSTF1">
    <location>
        <begin position="1"/>
        <end position="219"/>
    </location>
</feature>
<feature type="domain" description="GST N-terminal">
    <location>
        <begin position="2"/>
        <end position="83"/>
    </location>
</feature>
<feature type="domain" description="GST C-terminal">
    <location>
        <begin position="91"/>
        <end position="219"/>
    </location>
</feature>
<feature type="binding site" evidence="1">
    <location>
        <position position="12"/>
    </location>
    <ligand>
        <name>glutathione</name>
        <dbReference type="ChEBI" id="CHEBI:57925"/>
    </ligand>
</feature>
<feature type="binding site" evidence="1">
    <location>
        <begin position="41"/>
        <end position="42"/>
    </location>
    <ligand>
        <name>glutathione</name>
        <dbReference type="ChEBI" id="CHEBI:57925"/>
    </ligand>
</feature>
<feature type="binding site" evidence="1">
    <location>
        <begin position="54"/>
        <end position="55"/>
    </location>
    <ligand>
        <name>glutathione</name>
        <dbReference type="ChEBI" id="CHEBI:57925"/>
    </ligand>
</feature>
<feature type="binding site" evidence="1">
    <location>
        <begin position="67"/>
        <end position="68"/>
    </location>
    <ligand>
        <name>glutathione</name>
        <dbReference type="ChEBI" id="CHEBI:57925"/>
    </ligand>
</feature>
<feature type="sequence conflict" description="In Ref. 8; CAA05354." evidence="3" ref="8">
    <original>H</original>
    <variation>Q</variation>
    <location>
        <position position="193"/>
    </location>
</feature>
<evidence type="ECO:0000250" key="1"/>
<evidence type="ECO:0000269" key="2">
    <source ref="9"/>
</evidence>
<evidence type="ECO:0000305" key="3"/>
<evidence type="ECO:0000312" key="4">
    <source>
        <dbReference type="EMBL" id="EAZ11927.1"/>
    </source>
</evidence>
<reference key="1">
    <citation type="patent" date="2003-01-03" number="WO03000898">
        <title>Plant genes involved in defense against pathogens.</title>
        <authorList>
            <person name="Chang H.-S."/>
            <person name="Chen W."/>
            <person name="Cooper B."/>
            <person name="Glazebrook J."/>
            <person name="Goff S.A."/>
            <person name="Hou Y.-M."/>
            <person name="Katagiri F."/>
            <person name="Quan S."/>
            <person name="Tao Y."/>
            <person name="Whitham S."/>
            <person name="Xie Z."/>
            <person name="Zhu T."/>
            <person name="Zou G."/>
        </authorList>
    </citation>
    <scope>NUCLEOTIDE SEQUENCE [GENOMIC DNA]</scope>
</reference>
<reference key="2">
    <citation type="journal article" date="2002" name="Nature">
        <title>The genome sequence and structure of rice chromosome 1.</title>
        <authorList>
            <person name="Sasaki T."/>
            <person name="Matsumoto T."/>
            <person name="Yamamoto K."/>
            <person name="Sakata K."/>
            <person name="Baba T."/>
            <person name="Katayose Y."/>
            <person name="Wu J."/>
            <person name="Niimura Y."/>
            <person name="Cheng Z."/>
            <person name="Nagamura Y."/>
            <person name="Antonio B.A."/>
            <person name="Kanamori H."/>
            <person name="Hosokawa S."/>
            <person name="Masukawa M."/>
            <person name="Arikawa K."/>
            <person name="Chiden Y."/>
            <person name="Hayashi M."/>
            <person name="Okamoto M."/>
            <person name="Ando T."/>
            <person name="Aoki H."/>
            <person name="Arita K."/>
            <person name="Hamada M."/>
            <person name="Harada C."/>
            <person name="Hijishita S."/>
            <person name="Honda M."/>
            <person name="Ichikawa Y."/>
            <person name="Idonuma A."/>
            <person name="Iijima M."/>
            <person name="Ikeda M."/>
            <person name="Ikeno M."/>
            <person name="Ito S."/>
            <person name="Ito T."/>
            <person name="Ito Y."/>
            <person name="Ito Y."/>
            <person name="Iwabuchi A."/>
            <person name="Kamiya K."/>
            <person name="Karasawa W."/>
            <person name="Katagiri S."/>
            <person name="Kikuta A."/>
            <person name="Kobayashi N."/>
            <person name="Kono I."/>
            <person name="Machita K."/>
            <person name="Maehara T."/>
            <person name="Mizuno H."/>
            <person name="Mizubayashi T."/>
            <person name="Mukai Y."/>
            <person name="Nagasaki H."/>
            <person name="Nakashima M."/>
            <person name="Nakama Y."/>
            <person name="Nakamichi Y."/>
            <person name="Nakamura M."/>
            <person name="Namiki N."/>
            <person name="Negishi M."/>
            <person name="Ohta I."/>
            <person name="Ono N."/>
            <person name="Saji S."/>
            <person name="Sakai K."/>
            <person name="Shibata M."/>
            <person name="Shimokawa T."/>
            <person name="Shomura A."/>
            <person name="Song J."/>
            <person name="Takazaki Y."/>
            <person name="Terasawa K."/>
            <person name="Tsuji K."/>
            <person name="Waki K."/>
            <person name="Yamagata H."/>
            <person name="Yamane H."/>
            <person name="Yoshiki S."/>
            <person name="Yoshihara R."/>
            <person name="Yukawa K."/>
            <person name="Zhong H."/>
            <person name="Iwama H."/>
            <person name="Endo T."/>
            <person name="Ito H."/>
            <person name="Hahn J.H."/>
            <person name="Kim H.-I."/>
            <person name="Eun M.-Y."/>
            <person name="Yano M."/>
            <person name="Jiang J."/>
            <person name="Gojobori T."/>
        </authorList>
    </citation>
    <scope>NUCLEOTIDE SEQUENCE [LARGE SCALE GENOMIC DNA]</scope>
    <source>
        <strain>cv. Nipponbare</strain>
    </source>
</reference>
<reference key="3">
    <citation type="journal article" date="2005" name="Nature">
        <title>The map-based sequence of the rice genome.</title>
        <authorList>
            <consortium name="International rice genome sequencing project (IRGSP)"/>
        </authorList>
    </citation>
    <scope>NUCLEOTIDE SEQUENCE [LARGE SCALE GENOMIC DNA]</scope>
    <source>
        <strain>cv. Nipponbare</strain>
    </source>
</reference>
<reference key="4">
    <citation type="journal article" date="2008" name="Nucleic Acids Res.">
        <title>The rice annotation project database (RAP-DB): 2008 update.</title>
        <authorList>
            <consortium name="The rice annotation project (RAP)"/>
        </authorList>
    </citation>
    <scope>GENOME REANNOTATION</scope>
    <source>
        <strain>cv. Nipponbare</strain>
    </source>
</reference>
<reference key="5">
    <citation type="journal article" date="2013" name="Rice">
        <title>Improvement of the Oryza sativa Nipponbare reference genome using next generation sequence and optical map data.</title>
        <authorList>
            <person name="Kawahara Y."/>
            <person name="de la Bastide M."/>
            <person name="Hamilton J.P."/>
            <person name="Kanamori H."/>
            <person name="McCombie W.R."/>
            <person name="Ouyang S."/>
            <person name="Schwartz D.C."/>
            <person name="Tanaka T."/>
            <person name="Wu J."/>
            <person name="Zhou S."/>
            <person name="Childs K.L."/>
            <person name="Davidson R.M."/>
            <person name="Lin H."/>
            <person name="Quesada-Ocampo L."/>
            <person name="Vaillancourt B."/>
            <person name="Sakai H."/>
            <person name="Lee S.S."/>
            <person name="Kim J."/>
            <person name="Numa H."/>
            <person name="Itoh T."/>
            <person name="Buell C.R."/>
            <person name="Matsumoto T."/>
        </authorList>
    </citation>
    <scope>GENOME REANNOTATION</scope>
    <source>
        <strain>cv. Nipponbare</strain>
    </source>
</reference>
<reference key="6">
    <citation type="journal article" date="2005" name="PLoS Biol.">
        <title>The genomes of Oryza sativa: a history of duplications.</title>
        <authorList>
            <person name="Yu J."/>
            <person name="Wang J."/>
            <person name="Lin W."/>
            <person name="Li S."/>
            <person name="Li H."/>
            <person name="Zhou J."/>
            <person name="Ni P."/>
            <person name="Dong W."/>
            <person name="Hu S."/>
            <person name="Zeng C."/>
            <person name="Zhang J."/>
            <person name="Zhang Y."/>
            <person name="Li R."/>
            <person name="Xu Z."/>
            <person name="Li S."/>
            <person name="Li X."/>
            <person name="Zheng H."/>
            <person name="Cong L."/>
            <person name="Lin L."/>
            <person name="Yin J."/>
            <person name="Geng J."/>
            <person name="Li G."/>
            <person name="Shi J."/>
            <person name="Liu J."/>
            <person name="Lv H."/>
            <person name="Li J."/>
            <person name="Wang J."/>
            <person name="Deng Y."/>
            <person name="Ran L."/>
            <person name="Shi X."/>
            <person name="Wang X."/>
            <person name="Wu Q."/>
            <person name="Li C."/>
            <person name="Ren X."/>
            <person name="Wang J."/>
            <person name="Wang X."/>
            <person name="Li D."/>
            <person name="Liu D."/>
            <person name="Zhang X."/>
            <person name="Ji Z."/>
            <person name="Zhao W."/>
            <person name="Sun Y."/>
            <person name="Zhang Z."/>
            <person name="Bao J."/>
            <person name="Han Y."/>
            <person name="Dong L."/>
            <person name="Ji J."/>
            <person name="Chen P."/>
            <person name="Wu S."/>
            <person name="Liu J."/>
            <person name="Xiao Y."/>
            <person name="Bu D."/>
            <person name="Tan J."/>
            <person name="Yang L."/>
            <person name="Ye C."/>
            <person name="Zhang J."/>
            <person name="Xu J."/>
            <person name="Zhou Y."/>
            <person name="Yu Y."/>
            <person name="Zhang B."/>
            <person name="Zhuang S."/>
            <person name="Wei H."/>
            <person name="Liu B."/>
            <person name="Lei M."/>
            <person name="Yu H."/>
            <person name="Li Y."/>
            <person name="Xu H."/>
            <person name="Wei S."/>
            <person name="He X."/>
            <person name="Fang L."/>
            <person name="Zhang Z."/>
            <person name="Zhang Y."/>
            <person name="Huang X."/>
            <person name="Su Z."/>
            <person name="Tong W."/>
            <person name="Li J."/>
            <person name="Tong Z."/>
            <person name="Li S."/>
            <person name="Ye J."/>
            <person name="Wang L."/>
            <person name="Fang L."/>
            <person name="Lei T."/>
            <person name="Chen C.-S."/>
            <person name="Chen H.-C."/>
            <person name="Xu Z."/>
            <person name="Li H."/>
            <person name="Huang H."/>
            <person name="Zhang F."/>
            <person name="Xu H."/>
            <person name="Li N."/>
            <person name="Zhao C."/>
            <person name="Li S."/>
            <person name="Dong L."/>
            <person name="Huang Y."/>
            <person name="Li L."/>
            <person name="Xi Y."/>
            <person name="Qi Q."/>
            <person name="Li W."/>
            <person name="Zhang B."/>
            <person name="Hu W."/>
            <person name="Zhang Y."/>
            <person name="Tian X."/>
            <person name="Jiao Y."/>
            <person name="Liang X."/>
            <person name="Jin J."/>
            <person name="Gao L."/>
            <person name="Zheng W."/>
            <person name="Hao B."/>
            <person name="Liu S.-M."/>
            <person name="Wang W."/>
            <person name="Yuan L."/>
            <person name="Cao M."/>
            <person name="McDermott J."/>
            <person name="Samudrala R."/>
            <person name="Wang J."/>
            <person name="Wong G.K.-S."/>
            <person name="Yang H."/>
        </authorList>
    </citation>
    <scope>NUCLEOTIDE SEQUENCE [LARGE SCALE GENOMIC DNA]</scope>
    <source>
        <strain>cv. Nipponbare</strain>
    </source>
</reference>
<reference key="7">
    <citation type="journal article" date="2003" name="Science">
        <title>Collection, mapping, and annotation of over 28,000 cDNA clones from japonica rice.</title>
        <authorList>
            <consortium name="The rice full-length cDNA consortium"/>
        </authorList>
    </citation>
    <scope>NUCLEOTIDE SEQUENCE [LARGE SCALE MRNA]</scope>
    <source>
        <strain>cv. Nipponbare</strain>
    </source>
</reference>
<reference key="8">
    <citation type="online journal article" date="1998" name="Plant Gene Register">
        <title>Nucleotide sequence of a cDNA encoding glutathione S-transferase from rice (Oryza sativa).</title>
        <authorList>
            <person name="Wu J."/>
            <person name="Cramer C."/>
            <person name="Hatzios K.K."/>
        </authorList>
        <locator>PGR98-120</locator>
    </citation>
    <scope>NUCLEOTIDE SEQUENCE [MRNA] OF 50-198</scope>
    <source>
        <strain>cv. Lemont</strain>
    </source>
</reference>
<reference key="9">
    <citation type="journal article" date="1999" name="Physiol. Plantarum">
        <title>Characterization of two cDNAs encoding glutathione S-transferases in rice and induction of their transcripts by the herbicide safener fenclorim.</title>
        <authorList>
            <person name="Wu J."/>
            <person name="Cramer C."/>
            <person name="Hatzios K.K."/>
        </authorList>
    </citation>
    <scope>CHARACTERIZATION</scope>
    <scope>TISSUE SPECIFICITY</scope>
    <scope>INDUCTION</scope>
    <source>
        <strain>cv. Lemont</strain>
    </source>
</reference>
<reference key="10">
    <citation type="journal article" date="2004" name="Mol. Genet. Genomics">
        <title>Organisation and structural evolution of the rice glutathione S-transferase gene family.</title>
        <authorList>
            <person name="Soranzo N."/>
            <person name="Sari Gorla M."/>
            <person name="Mizzi L."/>
            <person name="De Toma G."/>
            <person name="Frova C."/>
        </authorList>
    </citation>
    <scope>NOMENCLATURE</scope>
</reference>
<proteinExistence type="evidence at protein level"/>
<comment type="function">
    <text>Conjugation of reduced glutathione to a wide number of exogenous and endogenous hydrophobic electrophiles.</text>
</comment>
<comment type="catalytic activity">
    <reaction>
        <text>RX + glutathione = an S-substituted glutathione + a halide anion + H(+)</text>
        <dbReference type="Rhea" id="RHEA:16437"/>
        <dbReference type="ChEBI" id="CHEBI:15378"/>
        <dbReference type="ChEBI" id="CHEBI:16042"/>
        <dbReference type="ChEBI" id="CHEBI:17792"/>
        <dbReference type="ChEBI" id="CHEBI:57925"/>
        <dbReference type="ChEBI" id="CHEBI:90779"/>
        <dbReference type="EC" id="2.5.1.18"/>
    </reaction>
</comment>
<comment type="tissue specificity">
    <text evidence="2">Constitutively expressed in roots.</text>
</comment>
<comment type="induction">
    <text evidence="2">By the herbicide safener fenclorim.</text>
</comment>
<comment type="similarity">
    <text evidence="3">Belongs to the GST superfamily. Phi family.</text>
</comment>
<dbReference type="EC" id="2.5.1.18"/>
<dbReference type="EMBL" id="AX654621">
    <property type="status" value="NOT_ANNOTATED_CDS"/>
    <property type="molecule type" value="Unassigned_DNA"/>
</dbReference>
<dbReference type="EMBL" id="AP002914">
    <property type="protein sequence ID" value="BAB39939.1"/>
    <property type="molecule type" value="Genomic_DNA"/>
</dbReference>
<dbReference type="EMBL" id="AP003198">
    <property type="protein sequence ID" value="BAB64040.1"/>
    <property type="molecule type" value="Genomic_DNA"/>
</dbReference>
<dbReference type="EMBL" id="AP008207">
    <property type="protein sequence ID" value="BAF04973.1"/>
    <property type="molecule type" value="Genomic_DNA"/>
</dbReference>
<dbReference type="EMBL" id="AP014957">
    <property type="protein sequence ID" value="BAS72176.1"/>
    <property type="molecule type" value="Genomic_DNA"/>
</dbReference>
<dbReference type="EMBL" id="CM000138">
    <property type="protein sequence ID" value="EAZ11927.1"/>
    <property type="molecule type" value="Genomic_DNA"/>
</dbReference>
<dbReference type="EMBL" id="AK058900">
    <property type="protein sequence ID" value="BAG86834.1"/>
    <property type="molecule type" value="mRNA"/>
</dbReference>
<dbReference type="EMBL" id="AJ002380">
    <property type="protein sequence ID" value="CAA05354.1"/>
    <property type="molecule type" value="mRNA"/>
</dbReference>
<dbReference type="PIR" id="T03987">
    <property type="entry name" value="T03987"/>
</dbReference>
<dbReference type="RefSeq" id="XP_015632407.1">
    <property type="nucleotide sequence ID" value="XM_015776921.1"/>
</dbReference>
<dbReference type="SMR" id="O65857"/>
<dbReference type="FunCoup" id="O65857">
    <property type="interactions" value="994"/>
</dbReference>
<dbReference type="STRING" id="39947.O65857"/>
<dbReference type="PaxDb" id="39947-O65857"/>
<dbReference type="EnsemblPlants" id="Os01t0371200-01">
    <property type="protein sequence ID" value="Os01t0371200-01"/>
    <property type="gene ID" value="Os01g0371200"/>
</dbReference>
<dbReference type="Gramene" id="Os01t0371200-01">
    <property type="protein sequence ID" value="Os01t0371200-01"/>
    <property type="gene ID" value="Os01g0371200"/>
</dbReference>
<dbReference type="KEGG" id="dosa:Os01g0371200"/>
<dbReference type="eggNOG" id="KOG0867">
    <property type="taxonomic scope" value="Eukaryota"/>
</dbReference>
<dbReference type="HOGENOM" id="CLU_011226_5_1_1"/>
<dbReference type="InParanoid" id="O65857"/>
<dbReference type="OMA" id="ITVFHAP"/>
<dbReference type="OrthoDB" id="422574at2759"/>
<dbReference type="Proteomes" id="UP000000763">
    <property type="component" value="Chromosome 1"/>
</dbReference>
<dbReference type="Proteomes" id="UP000007752">
    <property type="component" value="Chromosome 1"/>
</dbReference>
<dbReference type="Proteomes" id="UP000059680">
    <property type="component" value="Chromosome 1"/>
</dbReference>
<dbReference type="GO" id="GO:0005737">
    <property type="term" value="C:cytoplasm"/>
    <property type="evidence" value="ECO:0000318"/>
    <property type="project" value="GO_Central"/>
</dbReference>
<dbReference type="GO" id="GO:0043295">
    <property type="term" value="F:glutathione binding"/>
    <property type="evidence" value="ECO:0000318"/>
    <property type="project" value="GO_Central"/>
</dbReference>
<dbReference type="GO" id="GO:0004364">
    <property type="term" value="F:glutathione transferase activity"/>
    <property type="evidence" value="ECO:0000318"/>
    <property type="project" value="GO_Central"/>
</dbReference>
<dbReference type="GO" id="GO:0006749">
    <property type="term" value="P:glutathione metabolic process"/>
    <property type="evidence" value="ECO:0000318"/>
    <property type="project" value="GO_Central"/>
</dbReference>
<dbReference type="GO" id="GO:0009636">
    <property type="term" value="P:response to toxic substance"/>
    <property type="evidence" value="ECO:0007669"/>
    <property type="project" value="UniProtKB-ARBA"/>
</dbReference>
<dbReference type="CDD" id="cd03187">
    <property type="entry name" value="GST_C_Phi"/>
    <property type="match status" value="1"/>
</dbReference>
<dbReference type="CDD" id="cd03053">
    <property type="entry name" value="GST_N_Phi"/>
    <property type="match status" value="1"/>
</dbReference>
<dbReference type="FunFam" id="1.20.1050.10:FF:000004">
    <property type="entry name" value="Glutathione S-transferase F2"/>
    <property type="match status" value="1"/>
</dbReference>
<dbReference type="FunFam" id="3.40.30.10:FF:000016">
    <property type="entry name" value="Glutathione S-transferase F2"/>
    <property type="match status" value="1"/>
</dbReference>
<dbReference type="Gene3D" id="1.20.1050.10">
    <property type="match status" value="1"/>
</dbReference>
<dbReference type="Gene3D" id="3.40.30.10">
    <property type="entry name" value="Glutaredoxin"/>
    <property type="match status" value="1"/>
</dbReference>
<dbReference type="InterPro" id="IPR010987">
    <property type="entry name" value="Glutathione-S-Trfase_C-like"/>
</dbReference>
<dbReference type="InterPro" id="IPR036282">
    <property type="entry name" value="Glutathione-S-Trfase_C_sf"/>
</dbReference>
<dbReference type="InterPro" id="IPR040079">
    <property type="entry name" value="Glutathione_S-Trfase"/>
</dbReference>
<dbReference type="InterPro" id="IPR004045">
    <property type="entry name" value="Glutathione_S-Trfase_N"/>
</dbReference>
<dbReference type="InterPro" id="IPR004046">
    <property type="entry name" value="GST_C"/>
</dbReference>
<dbReference type="InterPro" id="IPR034347">
    <property type="entry name" value="GST_Phi_C"/>
</dbReference>
<dbReference type="InterPro" id="IPR036249">
    <property type="entry name" value="Thioredoxin-like_sf"/>
</dbReference>
<dbReference type="PANTHER" id="PTHR43900:SF49">
    <property type="entry name" value="GLUTATHIONE S-TRANSFERASE GSTF1-RELATED"/>
    <property type="match status" value="1"/>
</dbReference>
<dbReference type="PANTHER" id="PTHR43900">
    <property type="entry name" value="GLUTATHIONE S-TRANSFERASE RHO"/>
    <property type="match status" value="1"/>
</dbReference>
<dbReference type="Pfam" id="PF00043">
    <property type="entry name" value="GST_C"/>
    <property type="match status" value="1"/>
</dbReference>
<dbReference type="Pfam" id="PF02798">
    <property type="entry name" value="GST_N"/>
    <property type="match status" value="1"/>
</dbReference>
<dbReference type="SFLD" id="SFLDS00019">
    <property type="entry name" value="Glutathione_Transferase_(cytos"/>
    <property type="match status" value="1"/>
</dbReference>
<dbReference type="SFLD" id="SFLDG01154">
    <property type="entry name" value="Main.5:_Phi-like"/>
    <property type="match status" value="1"/>
</dbReference>
<dbReference type="SUPFAM" id="SSF47616">
    <property type="entry name" value="GST C-terminal domain-like"/>
    <property type="match status" value="1"/>
</dbReference>
<dbReference type="SUPFAM" id="SSF52833">
    <property type="entry name" value="Thioredoxin-like"/>
    <property type="match status" value="1"/>
</dbReference>
<dbReference type="PROSITE" id="PS50405">
    <property type="entry name" value="GST_CTER"/>
    <property type="match status" value="1"/>
</dbReference>
<dbReference type="PROSITE" id="PS50404">
    <property type="entry name" value="GST_NTER"/>
    <property type="match status" value="1"/>
</dbReference>
<keyword id="KW-1185">Reference proteome</keyword>
<keyword id="KW-0808">Transferase</keyword>
<protein>
    <recommendedName>
        <fullName>Probable glutathione S-transferase GSTF1</fullName>
        <ecNumber>2.5.1.18</ecNumber>
    </recommendedName>
    <alternativeName>
        <fullName>GST-I</fullName>
    </alternativeName>
</protein>
<gene>
    <name type="primary">GSTF1</name>
    <name type="synonym">RGST I</name>
    <name type="ordered locus">Os01g0371200</name>
    <name type="ordered locus">LOC_Os01g27360</name>
    <name type="ORF">B1039D07.2</name>
    <name evidence="4" type="ORF">OsJ_01799</name>
    <name type="ORF">P0493G01.33</name>
</gene>
<sequence length="219" mass="24924">MTPVKVFGPAQSTNVARVLLCLEEVGAEYEVVNVDFTVMEHKSPEHLKRNPFGQIPAFQDGDLYLFESRAIGKYILRKYKTREADLLREGNLREAAMVDVWTEVETHQYNSAISPIVYECIINPAMRGIPTNQKVVDESAEKLKKVLEVYEARLSQSTYLAGDFVSFADLNHFPYTFYFMGTPYASLFDSYPHVKAWWERLMARPSVKKLAAVMAPQGA</sequence>